<proteinExistence type="inferred from homology"/>
<name>LPLT_SALG2</name>
<accession>B5RDY5</accession>
<protein>
    <recommendedName>
        <fullName evidence="1">Lysophospholipid transporter LplT</fullName>
    </recommendedName>
</protein>
<feature type="chain" id="PRO_1000201276" description="Lysophospholipid transporter LplT">
    <location>
        <begin position="1"/>
        <end position="400"/>
    </location>
</feature>
<feature type="transmembrane region" description="Helical" evidence="1">
    <location>
        <begin position="19"/>
        <end position="39"/>
    </location>
</feature>
<feature type="transmembrane region" description="Helical" evidence="1">
    <location>
        <begin position="53"/>
        <end position="73"/>
    </location>
</feature>
<feature type="transmembrane region" description="Helical" evidence="1">
    <location>
        <begin position="91"/>
        <end position="111"/>
    </location>
</feature>
<feature type="transmembrane region" description="Helical" evidence="1">
    <location>
        <begin position="139"/>
        <end position="159"/>
    </location>
</feature>
<feature type="transmembrane region" description="Helical" evidence="1">
    <location>
        <begin position="164"/>
        <end position="184"/>
    </location>
</feature>
<feature type="transmembrane region" description="Helical" evidence="1">
    <location>
        <begin position="227"/>
        <end position="247"/>
    </location>
</feature>
<feature type="transmembrane region" description="Helical" evidence="1">
    <location>
        <begin position="257"/>
        <end position="277"/>
    </location>
</feature>
<feature type="transmembrane region" description="Helical" evidence="1">
    <location>
        <begin position="281"/>
        <end position="301"/>
    </location>
</feature>
<feature type="transmembrane region" description="Helical" evidence="1">
    <location>
        <begin position="304"/>
        <end position="324"/>
    </location>
</feature>
<feature type="transmembrane region" description="Helical" evidence="1">
    <location>
        <begin position="352"/>
        <end position="372"/>
    </location>
</feature>
<feature type="transmembrane region" description="Helical" evidence="1">
    <location>
        <begin position="373"/>
        <end position="393"/>
    </location>
</feature>
<organism>
    <name type="scientific">Salmonella gallinarum (strain 287/91 / NCTC 13346)</name>
    <dbReference type="NCBI Taxonomy" id="550538"/>
    <lineage>
        <taxon>Bacteria</taxon>
        <taxon>Pseudomonadati</taxon>
        <taxon>Pseudomonadota</taxon>
        <taxon>Gammaproteobacteria</taxon>
        <taxon>Enterobacterales</taxon>
        <taxon>Enterobacteriaceae</taxon>
        <taxon>Salmonella</taxon>
    </lineage>
</organism>
<evidence type="ECO:0000255" key="1">
    <source>
        <dbReference type="HAMAP-Rule" id="MF_01585"/>
    </source>
</evidence>
<keyword id="KW-0997">Cell inner membrane</keyword>
<keyword id="KW-1003">Cell membrane</keyword>
<keyword id="KW-0445">Lipid transport</keyword>
<keyword id="KW-0472">Membrane</keyword>
<keyword id="KW-0812">Transmembrane</keyword>
<keyword id="KW-1133">Transmembrane helix</keyword>
<keyword id="KW-0813">Transport</keyword>
<sequence length="400" mass="41458">MSESVRTNTSIWSKGMLSVIVAQFLSAFGDNALLFATLALLKAQFYPDWSQPVLQMVFVGAYILFAPFVGQIADSFAKGRVMMVANGLKLAGAAGICLGVNPFVGYTLVGIGAAAYSPAKYGILGELTTGDKLVKANGLMEASTIAAILLGSVAGGVLADWHVIAALVACALAYAGAVAANLFIPKLVAARPGQSWRLSAMTRSCFSACVVLWSNGETRFSLVGTGLFWGAGVTLRFLLVLWVPVALGITDNATPTYLNAMVAVGIVVGAGAAAKLVTLETVSRCMPAGILIGVVVAIFSLQHALLPAYALLLLIGMLGGFFVVPLNALLQERGKKSVGAGNAIAVQNLGENSAMLLMLGLYSLAVLVGVPAVAIGIGFGVLFALAIAALWIWQRRQASY</sequence>
<gene>
    <name evidence="1" type="primary">lplT</name>
    <name type="ordered locus">SG2918</name>
</gene>
<comment type="function">
    <text evidence="1">Catalyzes the facilitated diffusion of 2-acyl-glycero-3-phosphoethanolamine (2-acyl-GPE) into the cell.</text>
</comment>
<comment type="subcellular location">
    <subcellularLocation>
        <location evidence="1">Cell inner membrane</location>
        <topology evidence="1">Multi-pass membrane protein</topology>
    </subcellularLocation>
</comment>
<comment type="similarity">
    <text evidence="1">Belongs to the major facilitator superfamily. LplT (TC 2.A.1.42) family.</text>
</comment>
<dbReference type="EMBL" id="AM933173">
    <property type="protein sequence ID" value="CAR38723.1"/>
    <property type="molecule type" value="Genomic_DNA"/>
</dbReference>
<dbReference type="RefSeq" id="WP_000004683.1">
    <property type="nucleotide sequence ID" value="NC_011274.1"/>
</dbReference>
<dbReference type="SMR" id="B5RDY5"/>
<dbReference type="KEGG" id="seg:SG2918"/>
<dbReference type="HOGENOM" id="CLU_047399_0_0_6"/>
<dbReference type="Proteomes" id="UP000008321">
    <property type="component" value="Chromosome"/>
</dbReference>
<dbReference type="GO" id="GO:0005886">
    <property type="term" value="C:plasma membrane"/>
    <property type="evidence" value="ECO:0007669"/>
    <property type="project" value="UniProtKB-SubCell"/>
</dbReference>
<dbReference type="GO" id="GO:0051978">
    <property type="term" value="F:lysophospholipid:sodium symporter activity"/>
    <property type="evidence" value="ECO:0007669"/>
    <property type="project" value="InterPro"/>
</dbReference>
<dbReference type="CDD" id="cd06173">
    <property type="entry name" value="MFS_MefA_like"/>
    <property type="match status" value="1"/>
</dbReference>
<dbReference type="Gene3D" id="1.20.1250.20">
    <property type="entry name" value="MFS general substrate transporter like domains"/>
    <property type="match status" value="1"/>
</dbReference>
<dbReference type="HAMAP" id="MF_01585">
    <property type="entry name" value="MFS_LplT"/>
    <property type="match status" value="1"/>
</dbReference>
<dbReference type="InterPro" id="IPR023727">
    <property type="entry name" value="LysoPLipid__transptr_LplT"/>
</dbReference>
<dbReference type="InterPro" id="IPR011701">
    <property type="entry name" value="MFS"/>
</dbReference>
<dbReference type="InterPro" id="IPR036259">
    <property type="entry name" value="MFS_trans_sf"/>
</dbReference>
<dbReference type="NCBIfam" id="NF008397">
    <property type="entry name" value="PRK11195.1"/>
    <property type="match status" value="1"/>
</dbReference>
<dbReference type="PANTHER" id="PTHR43266">
    <property type="entry name" value="MACROLIDE-EFFLUX PROTEIN"/>
    <property type="match status" value="1"/>
</dbReference>
<dbReference type="PANTHER" id="PTHR43266:SF2">
    <property type="entry name" value="MAJOR FACILITATOR SUPERFAMILY (MFS) PROFILE DOMAIN-CONTAINING PROTEIN"/>
    <property type="match status" value="1"/>
</dbReference>
<dbReference type="Pfam" id="PF07690">
    <property type="entry name" value="MFS_1"/>
    <property type="match status" value="1"/>
</dbReference>
<dbReference type="SUPFAM" id="SSF103473">
    <property type="entry name" value="MFS general substrate transporter"/>
    <property type="match status" value="1"/>
</dbReference>
<reference key="1">
    <citation type="journal article" date="2008" name="Genome Res.">
        <title>Comparative genome analysis of Salmonella enteritidis PT4 and Salmonella gallinarum 287/91 provides insights into evolutionary and host adaptation pathways.</title>
        <authorList>
            <person name="Thomson N.R."/>
            <person name="Clayton D.J."/>
            <person name="Windhorst D."/>
            <person name="Vernikos G."/>
            <person name="Davidson S."/>
            <person name="Churcher C."/>
            <person name="Quail M.A."/>
            <person name="Stevens M."/>
            <person name="Jones M.A."/>
            <person name="Watson M."/>
            <person name="Barron A."/>
            <person name="Layton A."/>
            <person name="Pickard D."/>
            <person name="Kingsley R.A."/>
            <person name="Bignell A."/>
            <person name="Clark L."/>
            <person name="Harris B."/>
            <person name="Ormond D."/>
            <person name="Abdellah Z."/>
            <person name="Brooks K."/>
            <person name="Cherevach I."/>
            <person name="Chillingworth T."/>
            <person name="Woodward J."/>
            <person name="Norberczak H."/>
            <person name="Lord A."/>
            <person name="Arrowsmith C."/>
            <person name="Jagels K."/>
            <person name="Moule S."/>
            <person name="Mungall K."/>
            <person name="Saunders M."/>
            <person name="Whitehead S."/>
            <person name="Chabalgoity J.A."/>
            <person name="Maskell D."/>
            <person name="Humphreys T."/>
            <person name="Roberts M."/>
            <person name="Barrow P.A."/>
            <person name="Dougan G."/>
            <person name="Parkhill J."/>
        </authorList>
    </citation>
    <scope>NUCLEOTIDE SEQUENCE [LARGE SCALE GENOMIC DNA]</scope>
    <source>
        <strain>287/91 / NCTC 13346</strain>
    </source>
</reference>